<name>CUP8_DROME</name>
<keyword id="KW-0193">Cuticle</keyword>
<keyword id="KW-1185">Reference proteome</keyword>
<keyword id="KW-0732">Signal</keyword>
<evidence type="ECO:0000255" key="1"/>
<evidence type="ECO:0000255" key="2">
    <source>
        <dbReference type="PROSITE-ProRule" id="PRU00497"/>
    </source>
</evidence>
<evidence type="ECO:0000256" key="3">
    <source>
        <dbReference type="SAM" id="MobiDB-lite"/>
    </source>
</evidence>
<reference key="1">
    <citation type="journal article" date="1991" name="Dev. Biol.">
        <title>20-Hydroxyecdysone is required for, and negatively regulates, transcription of Drosophila pupal cuticle protein genes.</title>
        <authorList>
            <person name="Apple R.T."/>
            <person name="Fristrom J.W."/>
        </authorList>
    </citation>
    <scope>NUCLEOTIDE SEQUENCE [GENOMIC DNA]</scope>
    <source>
        <strain>Oregon-R</strain>
    </source>
</reference>
<reference key="2">
    <citation type="submission" date="1999-01" db="EMBL/GenBank/DDBJ databases">
        <title>Complete sequence of the Antennapedia complex of Drosophila.</title>
        <authorList>
            <person name="Celniker S.E."/>
            <person name="Pfeiffer B."/>
            <person name="Knafels J."/>
            <person name="Martin C.H."/>
            <person name="Mayeda C.A."/>
            <person name="Palazzolo M.J."/>
        </authorList>
    </citation>
    <scope>NUCLEOTIDE SEQUENCE [GENOMIC DNA]</scope>
    <source>
        <strain>Berkeley</strain>
    </source>
</reference>
<reference key="3">
    <citation type="journal article" date="2000" name="Science">
        <title>The genome sequence of Drosophila melanogaster.</title>
        <authorList>
            <person name="Adams M.D."/>
            <person name="Celniker S.E."/>
            <person name="Holt R.A."/>
            <person name="Evans C.A."/>
            <person name="Gocayne J.D."/>
            <person name="Amanatides P.G."/>
            <person name="Scherer S.E."/>
            <person name="Li P.W."/>
            <person name="Hoskins R.A."/>
            <person name="Galle R.F."/>
            <person name="George R.A."/>
            <person name="Lewis S.E."/>
            <person name="Richards S."/>
            <person name="Ashburner M."/>
            <person name="Henderson S.N."/>
            <person name="Sutton G.G."/>
            <person name="Wortman J.R."/>
            <person name="Yandell M.D."/>
            <person name="Zhang Q."/>
            <person name="Chen L.X."/>
            <person name="Brandon R.C."/>
            <person name="Rogers Y.-H.C."/>
            <person name="Blazej R.G."/>
            <person name="Champe M."/>
            <person name="Pfeiffer B.D."/>
            <person name="Wan K.H."/>
            <person name="Doyle C."/>
            <person name="Baxter E.G."/>
            <person name="Helt G."/>
            <person name="Nelson C.R."/>
            <person name="Miklos G.L.G."/>
            <person name="Abril J.F."/>
            <person name="Agbayani A."/>
            <person name="An H.-J."/>
            <person name="Andrews-Pfannkoch C."/>
            <person name="Baldwin D."/>
            <person name="Ballew R.M."/>
            <person name="Basu A."/>
            <person name="Baxendale J."/>
            <person name="Bayraktaroglu L."/>
            <person name="Beasley E.M."/>
            <person name="Beeson K.Y."/>
            <person name="Benos P.V."/>
            <person name="Berman B.P."/>
            <person name="Bhandari D."/>
            <person name="Bolshakov S."/>
            <person name="Borkova D."/>
            <person name="Botchan M.R."/>
            <person name="Bouck J."/>
            <person name="Brokstein P."/>
            <person name="Brottier P."/>
            <person name="Burtis K.C."/>
            <person name="Busam D.A."/>
            <person name="Butler H."/>
            <person name="Cadieu E."/>
            <person name="Center A."/>
            <person name="Chandra I."/>
            <person name="Cherry J.M."/>
            <person name="Cawley S."/>
            <person name="Dahlke C."/>
            <person name="Davenport L.B."/>
            <person name="Davies P."/>
            <person name="de Pablos B."/>
            <person name="Delcher A."/>
            <person name="Deng Z."/>
            <person name="Mays A.D."/>
            <person name="Dew I."/>
            <person name="Dietz S.M."/>
            <person name="Dodson K."/>
            <person name="Doup L.E."/>
            <person name="Downes M."/>
            <person name="Dugan-Rocha S."/>
            <person name="Dunkov B.C."/>
            <person name="Dunn P."/>
            <person name="Durbin K.J."/>
            <person name="Evangelista C.C."/>
            <person name="Ferraz C."/>
            <person name="Ferriera S."/>
            <person name="Fleischmann W."/>
            <person name="Fosler C."/>
            <person name="Gabrielian A.E."/>
            <person name="Garg N.S."/>
            <person name="Gelbart W.M."/>
            <person name="Glasser K."/>
            <person name="Glodek A."/>
            <person name="Gong F."/>
            <person name="Gorrell J.H."/>
            <person name="Gu Z."/>
            <person name="Guan P."/>
            <person name="Harris M."/>
            <person name="Harris N.L."/>
            <person name="Harvey D.A."/>
            <person name="Heiman T.J."/>
            <person name="Hernandez J.R."/>
            <person name="Houck J."/>
            <person name="Hostin D."/>
            <person name="Houston K.A."/>
            <person name="Howland T.J."/>
            <person name="Wei M.-H."/>
            <person name="Ibegwam C."/>
            <person name="Jalali M."/>
            <person name="Kalush F."/>
            <person name="Karpen G.H."/>
            <person name="Ke Z."/>
            <person name="Kennison J.A."/>
            <person name="Ketchum K.A."/>
            <person name="Kimmel B.E."/>
            <person name="Kodira C.D."/>
            <person name="Kraft C.L."/>
            <person name="Kravitz S."/>
            <person name="Kulp D."/>
            <person name="Lai Z."/>
            <person name="Lasko P."/>
            <person name="Lei Y."/>
            <person name="Levitsky A.A."/>
            <person name="Li J.H."/>
            <person name="Li Z."/>
            <person name="Liang Y."/>
            <person name="Lin X."/>
            <person name="Liu X."/>
            <person name="Mattei B."/>
            <person name="McIntosh T.C."/>
            <person name="McLeod M.P."/>
            <person name="McPherson D."/>
            <person name="Merkulov G."/>
            <person name="Milshina N.V."/>
            <person name="Mobarry C."/>
            <person name="Morris J."/>
            <person name="Moshrefi A."/>
            <person name="Mount S.M."/>
            <person name="Moy M."/>
            <person name="Murphy B."/>
            <person name="Murphy L."/>
            <person name="Muzny D.M."/>
            <person name="Nelson D.L."/>
            <person name="Nelson D.R."/>
            <person name="Nelson K.A."/>
            <person name="Nixon K."/>
            <person name="Nusskern D.R."/>
            <person name="Pacleb J.M."/>
            <person name="Palazzolo M."/>
            <person name="Pittman G.S."/>
            <person name="Pan S."/>
            <person name="Pollard J."/>
            <person name="Puri V."/>
            <person name="Reese M.G."/>
            <person name="Reinert K."/>
            <person name="Remington K."/>
            <person name="Saunders R.D.C."/>
            <person name="Scheeler F."/>
            <person name="Shen H."/>
            <person name="Shue B.C."/>
            <person name="Siden-Kiamos I."/>
            <person name="Simpson M."/>
            <person name="Skupski M.P."/>
            <person name="Smith T.J."/>
            <person name="Spier E."/>
            <person name="Spradling A.C."/>
            <person name="Stapleton M."/>
            <person name="Strong R."/>
            <person name="Sun E."/>
            <person name="Svirskas R."/>
            <person name="Tector C."/>
            <person name="Turner R."/>
            <person name="Venter E."/>
            <person name="Wang A.H."/>
            <person name="Wang X."/>
            <person name="Wang Z.-Y."/>
            <person name="Wassarman D.A."/>
            <person name="Weinstock G.M."/>
            <person name="Weissenbach J."/>
            <person name="Williams S.M."/>
            <person name="Woodage T."/>
            <person name="Worley K.C."/>
            <person name="Wu D."/>
            <person name="Yang S."/>
            <person name="Yao Q.A."/>
            <person name="Ye J."/>
            <person name="Yeh R.-F."/>
            <person name="Zaveri J.S."/>
            <person name="Zhan M."/>
            <person name="Zhang G."/>
            <person name="Zhao Q."/>
            <person name="Zheng L."/>
            <person name="Zheng X.H."/>
            <person name="Zhong F.N."/>
            <person name="Zhong W."/>
            <person name="Zhou X."/>
            <person name="Zhu S.C."/>
            <person name="Zhu X."/>
            <person name="Smith H.O."/>
            <person name="Gibbs R.A."/>
            <person name="Myers E.W."/>
            <person name="Rubin G.M."/>
            <person name="Venter J.C."/>
        </authorList>
    </citation>
    <scope>NUCLEOTIDE SEQUENCE [LARGE SCALE GENOMIC DNA]</scope>
    <source>
        <strain>Berkeley</strain>
    </source>
</reference>
<reference key="4">
    <citation type="journal article" date="2002" name="Genome Biol.">
        <title>Annotation of the Drosophila melanogaster euchromatic genome: a systematic review.</title>
        <authorList>
            <person name="Misra S."/>
            <person name="Crosby M.A."/>
            <person name="Mungall C.J."/>
            <person name="Matthews B.B."/>
            <person name="Campbell K.S."/>
            <person name="Hradecky P."/>
            <person name="Huang Y."/>
            <person name="Kaminker J.S."/>
            <person name="Millburn G.H."/>
            <person name="Prochnik S.E."/>
            <person name="Smith C.D."/>
            <person name="Tupy J.L."/>
            <person name="Whitfield E.J."/>
            <person name="Bayraktaroglu L."/>
            <person name="Berman B.P."/>
            <person name="Bettencourt B.R."/>
            <person name="Celniker S.E."/>
            <person name="de Grey A.D.N.J."/>
            <person name="Drysdale R.A."/>
            <person name="Harris N.L."/>
            <person name="Richter J."/>
            <person name="Russo S."/>
            <person name="Schroeder A.J."/>
            <person name="Shu S.Q."/>
            <person name="Stapleton M."/>
            <person name="Yamada C."/>
            <person name="Ashburner M."/>
            <person name="Gelbart W.M."/>
            <person name="Rubin G.M."/>
            <person name="Lewis S.E."/>
        </authorList>
    </citation>
    <scope>GENOME REANNOTATION</scope>
    <source>
        <strain>Berkeley</strain>
    </source>
</reference>
<organism>
    <name type="scientific">Drosophila melanogaster</name>
    <name type="common">Fruit fly</name>
    <dbReference type="NCBI Taxonomy" id="7227"/>
    <lineage>
        <taxon>Eukaryota</taxon>
        <taxon>Metazoa</taxon>
        <taxon>Ecdysozoa</taxon>
        <taxon>Arthropoda</taxon>
        <taxon>Hexapoda</taxon>
        <taxon>Insecta</taxon>
        <taxon>Pterygota</taxon>
        <taxon>Neoptera</taxon>
        <taxon>Endopterygota</taxon>
        <taxon>Diptera</taxon>
        <taxon>Brachycera</taxon>
        <taxon>Muscomorpha</taxon>
        <taxon>Ephydroidea</taxon>
        <taxon>Drosophilidae</taxon>
        <taxon>Drosophila</taxon>
        <taxon>Sophophora</taxon>
    </lineage>
</organism>
<dbReference type="EMBL" id="M71249">
    <property type="protein sequence ID" value="AAA28501.1"/>
    <property type="molecule type" value="Genomic_DNA"/>
</dbReference>
<dbReference type="EMBL" id="AE001572">
    <property type="protein sequence ID" value="AAD19810.1"/>
    <property type="molecule type" value="Genomic_DNA"/>
</dbReference>
<dbReference type="EMBL" id="AE014297">
    <property type="protein sequence ID" value="AAF54097.2"/>
    <property type="molecule type" value="Genomic_DNA"/>
</dbReference>
<dbReference type="PIR" id="B49773">
    <property type="entry name" value="B49773"/>
</dbReference>
<dbReference type="RefSeq" id="NP_524247.1">
    <property type="nucleotide sequence ID" value="NM_079523.3"/>
</dbReference>
<dbReference type="FunCoup" id="P27780">
    <property type="interactions" value="23"/>
</dbReference>
<dbReference type="STRING" id="7227.FBpp0081186"/>
<dbReference type="PaxDb" id="7227-FBpp0081186"/>
<dbReference type="DNASU" id="40818"/>
<dbReference type="EnsemblMetazoa" id="FBtr0081688">
    <property type="protein sequence ID" value="FBpp0081186"/>
    <property type="gene ID" value="FBgn0000552"/>
</dbReference>
<dbReference type="GeneID" id="40818"/>
<dbReference type="KEGG" id="dme:Dmel_CG2345"/>
<dbReference type="AGR" id="FB:FBgn0000552"/>
<dbReference type="CTD" id="40818"/>
<dbReference type="FlyBase" id="FBgn0000552">
    <property type="gene designation" value="Edg84A"/>
</dbReference>
<dbReference type="VEuPathDB" id="VectorBase:FBgn0000552"/>
<dbReference type="eggNOG" id="ENOG502TDXQ">
    <property type="taxonomic scope" value="Eukaryota"/>
</dbReference>
<dbReference type="GeneTree" id="ENSGT00940000166457"/>
<dbReference type="HOGENOM" id="CLU_075165_1_1_1"/>
<dbReference type="InParanoid" id="P27780"/>
<dbReference type="OMA" id="KTTVHHA"/>
<dbReference type="OrthoDB" id="7394989at2759"/>
<dbReference type="PhylomeDB" id="P27780"/>
<dbReference type="BioGRID-ORCS" id="40818">
    <property type="hits" value="0 hits in 1 CRISPR screen"/>
</dbReference>
<dbReference type="GenomeRNAi" id="40818"/>
<dbReference type="PRO" id="PR:P27780"/>
<dbReference type="Proteomes" id="UP000000803">
    <property type="component" value="Chromosome 3R"/>
</dbReference>
<dbReference type="Bgee" id="FBgn0000552">
    <property type="expression patterns" value="Expressed in adult olfactory projection neuron in brain and 5 other cell types or tissues"/>
</dbReference>
<dbReference type="ExpressionAtlas" id="P27780">
    <property type="expression patterns" value="baseline and differential"/>
</dbReference>
<dbReference type="GO" id="GO:0062129">
    <property type="term" value="C:chitin-based extracellular matrix"/>
    <property type="evidence" value="ECO:0000255"/>
    <property type="project" value="FlyBase"/>
</dbReference>
<dbReference type="GO" id="GO:0031012">
    <property type="term" value="C:extracellular matrix"/>
    <property type="evidence" value="ECO:0000318"/>
    <property type="project" value="GO_Central"/>
</dbReference>
<dbReference type="GO" id="GO:0008010">
    <property type="term" value="F:structural constituent of chitin-based larval cuticle"/>
    <property type="evidence" value="ECO:0000255"/>
    <property type="project" value="FlyBase"/>
</dbReference>
<dbReference type="GO" id="GO:0008011">
    <property type="term" value="F:structural constituent of pupal chitin-based cuticle"/>
    <property type="evidence" value="ECO:0000304"/>
    <property type="project" value="FlyBase"/>
</dbReference>
<dbReference type="GO" id="GO:0040003">
    <property type="term" value="P:chitin-based cuticle development"/>
    <property type="evidence" value="ECO:0000255"/>
    <property type="project" value="FlyBase"/>
</dbReference>
<dbReference type="InterPro" id="IPR031311">
    <property type="entry name" value="CHIT_BIND_RR_consensus"/>
</dbReference>
<dbReference type="InterPro" id="IPR000618">
    <property type="entry name" value="Insect_cuticle"/>
</dbReference>
<dbReference type="InterPro" id="IPR051217">
    <property type="entry name" value="Insect_Cuticle_Struc_Prot"/>
</dbReference>
<dbReference type="PANTHER" id="PTHR12236:SF86">
    <property type="entry name" value="CCP84AC-RELATED"/>
    <property type="match status" value="1"/>
</dbReference>
<dbReference type="PANTHER" id="PTHR12236">
    <property type="entry name" value="STRUCTURAL CONTITUENT OF CUTICLE"/>
    <property type="match status" value="1"/>
</dbReference>
<dbReference type="Pfam" id="PF00379">
    <property type="entry name" value="Chitin_bind_4"/>
    <property type="match status" value="1"/>
</dbReference>
<dbReference type="PRINTS" id="PR00947">
    <property type="entry name" value="CUTICLE"/>
</dbReference>
<dbReference type="PROSITE" id="PS00233">
    <property type="entry name" value="CHIT_BIND_RR_1"/>
    <property type="match status" value="1"/>
</dbReference>
<dbReference type="PROSITE" id="PS51155">
    <property type="entry name" value="CHIT_BIND_RR_2"/>
    <property type="match status" value="1"/>
</dbReference>
<proteinExistence type="evidence at transcript level"/>
<accession>P27780</accession>
<accession>Q9VI43</accession>
<comment type="function">
    <text>Component of the cuticle of the pupa of fruit fly.</text>
</comment>
<comment type="tissue specificity">
    <text>Imaginal (anterior) epidermis.</text>
</comment>
<gene>
    <name type="primary">Edg84A</name>
    <name type="synonym">EDG-84A</name>
    <name type="ORF">CG2345</name>
</gene>
<feature type="signal peptide" evidence="1">
    <location>
        <begin position="1"/>
        <end position="17"/>
    </location>
</feature>
<feature type="chain" id="PRO_0000006400" description="Pupal cuticle protein Edg-84A">
    <location>
        <begin position="18"/>
        <end position="188"/>
    </location>
</feature>
<feature type="domain" description="Chitin-binding type R&amp;R" evidence="2">
    <location>
        <begin position="34"/>
        <end position="100"/>
    </location>
</feature>
<feature type="region of interest" description="Disordered" evidence="3">
    <location>
        <begin position="19"/>
        <end position="67"/>
    </location>
</feature>
<feature type="compositionally biased region" description="Polar residues" evidence="3">
    <location>
        <begin position="24"/>
        <end position="41"/>
    </location>
</feature>
<feature type="compositionally biased region" description="Basic and acidic residues" evidence="3">
    <location>
        <begin position="49"/>
        <end position="62"/>
    </location>
</feature>
<protein>
    <recommendedName>
        <fullName>Pupal cuticle protein Edg-84A</fullName>
    </recommendedName>
</protein>
<sequence length="188" mass="20365">MLVKTALFVTLIGLAQAGPLPAKSSGSEDTYDSHPQYSFNYDVQDPETGDVKSQSESRDGDVVHGQYSVNDADGYRRTVDYTADDVRGFNAVVRREPLSSAAVVVKPQATAVVPKVQLKPLKKLPALKPLSQASAVVHRSFAPVVHHAPVTHVVHHAAPAHSFVSHHVPVLKTTVHHAHHPHAISYVF</sequence>